<sequence>MAAAAASGAGGVAVAGAGGAGPAGRLLPPPAAGPPAAPAAVPPAAVPARPTAPASRGSMAARIGYYEIDRTIGKGNFAVVKRATHLVTKAKVAIKIIDKSQLDEENLKKIFREVQIMKMLCHPHIIRLYQVMETERMIYLVTEYASGGEIFDHLVAHGRMAEKEARRKFKQIVTAVYFCHCRNIVHRDLKAENLLLDANLNIKIADFGFSNLFTPGQLLKTWCGSPPYAAPELFEGKEYDGPKVDIWSLGVVLYVLVCGALPFDGSTLQNLRARVLSGKFRIPFFMSTECEHLIRHMLVLDPNKRLSMEQICRHKWMKLGDADPNFDRLIAECQQLKEERQSDPLNDDVLLAMEDMGLDKERTLQSLRSDAYDHYSAIYSLLCDRHKKHKTLRPGALPSMPQAMTFQAPVNLQAEQTGTAMNLSVPQVQLINPENQIIEPDGAVNLDSDEGEEPSPEALVRYLSMRRHTVGVADPRTEVMEDLQKLLPGFPGVNPQGPFLQVAPNMNFTHNLLPMQSLQPTGQLEYKEQSLLQPPTLQLLNGMGPLGRRASDGGANIQLHAQQLLKRPRGPSPLVTMTPAVPAVTPVDEESSDGEPDQEAVQRYLANRSKRHTLAMTSPTAEIPPDLQRQLGQQSFRSRVWPPHLVPDQHRSTYKDSNTLHLPTERFSPVRRFSDGAASIQAFKAHLEKMGNSSSIKQLQQECEQLQKMYGGQVDERTLEKTQQQHMLYQQEQHHQILQQQIQDSICPPQPSPPLQVACENQPALLTHQLQRLRIQPSSPPPNHPSNHLFRQPSNSPPPVSSAMITSHGATSPSQFQGLPSHGAIFQQQPENCSPPPSVALTCLGLQQASQSQPVTIQLQEPVDMLSNMAGTAAGSAGRSIPISPSASQIQIQHRASLMAPFSYGHRPLSKQLSADSAEAHSLNMNRFSPANYDQAHLHPHLFSDQSRGSPSSYSPSTGVGFPPTQALKVPPLDQFPTFPPSAQQQPPHYTTSALQQALLSPTPPDYPRHQQVPHILQGLLSPRHSLTGHSDIRLPPAEFAQLIKRQQQHRQQQQQQQQQQEYHELFRHMNQGDAVSLAPSLGGQNMTEQQALSYQNADSYHRHHTSPQHILQIRAQDCISQGPSPTPTHGYAHQPPLMHSESMEEDCLCEGLKEGFPDKSSSTLTKGCHNSPLLLCTSGPGDPEPLLGTVSQARELGIHPYGHQPTATTFSRNKVPSRESVLGNCLERSSPGQAMELPDHNGLGYPVRPLVSEHLRSRTLQRHHTIQNSDDAYVQLDTLPGMSLVAGKALSSARMSDAVLSQSSLMGSQQFQDEEDEECGVSLGHEHPGLGDGSQHLNSSRYPATCVTDIMLSHKHPEVSFSMEQAGV</sequence>
<comment type="function">
    <text evidence="3 8">Positive regulator of mTOR signaling that functions by triggering the degradation of DEPTOR, an mTOR inhibitor (By similarity). Required for chondrocyte hypertrophy during skeletogenesis (PubMed:22318228). Negatively regulates cAMP signaling pathway possibly by acting on CRTC2/TORC2 and CRTC3/TORC3 (By similarity). Prevents HDAC4 translocation to the nucleus (PubMed:22318228).</text>
</comment>
<comment type="catalytic activity">
    <reaction evidence="3">
        <text>L-seryl-[protein] + ATP = O-phospho-L-seryl-[protein] + ADP + H(+)</text>
        <dbReference type="Rhea" id="RHEA:17989"/>
        <dbReference type="Rhea" id="RHEA-COMP:9863"/>
        <dbReference type="Rhea" id="RHEA-COMP:11604"/>
        <dbReference type="ChEBI" id="CHEBI:15378"/>
        <dbReference type="ChEBI" id="CHEBI:29999"/>
        <dbReference type="ChEBI" id="CHEBI:30616"/>
        <dbReference type="ChEBI" id="CHEBI:83421"/>
        <dbReference type="ChEBI" id="CHEBI:456216"/>
        <dbReference type="EC" id="2.7.11.1"/>
    </reaction>
</comment>
<comment type="catalytic activity">
    <reaction evidence="3">
        <text>L-threonyl-[protein] + ATP = O-phospho-L-threonyl-[protein] + ADP + H(+)</text>
        <dbReference type="Rhea" id="RHEA:46608"/>
        <dbReference type="Rhea" id="RHEA-COMP:11060"/>
        <dbReference type="Rhea" id="RHEA-COMP:11605"/>
        <dbReference type="ChEBI" id="CHEBI:15378"/>
        <dbReference type="ChEBI" id="CHEBI:30013"/>
        <dbReference type="ChEBI" id="CHEBI:30616"/>
        <dbReference type="ChEBI" id="CHEBI:61977"/>
        <dbReference type="ChEBI" id="CHEBI:456216"/>
        <dbReference type="EC" id="2.7.11.1"/>
    </reaction>
</comment>
<comment type="cofactor">
    <cofactor evidence="1">
        <name>Mg(2+)</name>
        <dbReference type="ChEBI" id="CHEBI:18420"/>
    </cofactor>
</comment>
<comment type="activity regulation">
    <text evidence="2">Activated by phosphorylation on Thr-221.</text>
</comment>
<comment type="subunit">
    <text evidence="3 8">Binds to and is activated by YWHAZ when phosphorylated on Thr-221 (By similarity). Interacts with 14-3-3 proteins (By similarity). Interacts with HDAC4; this interaction leads to HDAC4 retention in the cytoplasm (PubMed:22318228). Interacts with DEPTOR, MLST8/GbetaL, RICTOR and RPTOR (By similarity).</text>
</comment>
<comment type="subcellular location">
    <subcellularLocation>
        <location evidence="8">Cytoplasm</location>
    </subcellularLocation>
    <text evidence="3">Locates to punctate structures within the cytoplasm on binding to YWHAZ.</text>
</comment>
<comment type="alternative products">
    <event type="alternative splicing"/>
    <isoform>
        <id>Q6P4S6-1</id>
        <name>1</name>
        <sequence type="displayed"/>
    </isoform>
    <isoform>
        <id>Q6P4S6-2</id>
        <name>2</name>
        <sequence type="described" ref="VSP_020894 VSP_020895"/>
    </isoform>
</comment>
<comment type="tissue specificity">
    <text evidence="8">Expressed in hypertrophic chondrocytes in the growth plate.</text>
</comment>
<comment type="developmental stage">
    <text evidence="8 9">In the embryo, detected at 15.5 dpc in both prehypertrophic and hypertrophic chondrocytes in developing bones (PubMed:22318228). At postnatal day 1 (P1), in cartilage growth plate, expressed in early proliferating and prehypertrophic chondrocytes. This expression pattern is maintained at least until P21 (at protein level) (PubMed:30232230).</text>
</comment>
<comment type="PTM">
    <text evidence="1">Phosphorylated at Thr-221 by STK11/LKB1 in complex with STE20-related adapter-alpha (STRADA) pseudo kinase and CAB39.</text>
</comment>
<comment type="disruption phenotype">
    <text evidence="8">Mutant mice are born at the expected Mendelian rate, but 90% die on the first day after birth. The surviving animals show dwarfism throughout their postnatal life. They exhibit marked expansion of the growth plate and articular cartilage regions in the limbs, accumulation of chondrocytes in the sternum, ribs and spine, and impaired skull bone formation. Although chondrocyte hypertrophy and bone mineralization are markedly delayed, the body size is unaffected during embryogenesis, dwarfism appears as animals age.</text>
</comment>
<comment type="similarity">
    <text evidence="11">Belongs to the protein kinase superfamily. CAMK Ser/Thr protein kinase family. SNF1 subfamily.</text>
</comment>
<comment type="sequence caution" evidence="11">
    <molecule>Isoform 1</molecule>
    <conflict type="erroneous initiation">
        <sequence resource="EMBL-CDS" id="AAH63268"/>
    </conflict>
    <text>Extended N-terminus.</text>
</comment>
<comment type="sequence caution" evidence="11">
    <molecule>Isoform 1</molecule>
    <conflict type="erroneous initiation">
        <sequence resource="EMBL-CDS" id="AAH80688"/>
    </conflict>
    <text>Extended N-terminus.</text>
</comment>
<comment type="sequence caution" evidence="11">
    <molecule>Isoform 1</molecule>
    <conflict type="frameshift">
        <sequence resource="EMBL-CDS" id="AAH82313"/>
    </conflict>
</comment>
<proteinExistence type="evidence at protein level"/>
<gene>
    <name type="primary">Sik3</name>
    <name type="synonym">Kiaa0999</name>
    <name type="synonym">Qsk</name>
</gene>
<dbReference type="EC" id="2.7.11.1"/>
<dbReference type="EMBL" id="AK017789">
    <property type="protein sequence ID" value="BAB30934.1"/>
    <property type="molecule type" value="mRNA"/>
</dbReference>
<dbReference type="EMBL" id="AC122273">
    <property type="status" value="NOT_ANNOTATED_CDS"/>
    <property type="molecule type" value="Genomic_DNA"/>
</dbReference>
<dbReference type="EMBL" id="AC116503">
    <property type="status" value="NOT_ANNOTATED_CDS"/>
    <property type="molecule type" value="Genomic_DNA"/>
</dbReference>
<dbReference type="EMBL" id="BC033915">
    <property type="protein sequence ID" value="AAH33915.1"/>
    <property type="molecule type" value="mRNA"/>
</dbReference>
<dbReference type="EMBL" id="BC063268">
    <property type="protein sequence ID" value="AAH63268.2"/>
    <property type="status" value="ALT_INIT"/>
    <property type="molecule type" value="mRNA"/>
</dbReference>
<dbReference type="EMBL" id="BC080688">
    <property type="protein sequence ID" value="AAH80688.1"/>
    <property type="status" value="ALT_INIT"/>
    <property type="molecule type" value="mRNA"/>
</dbReference>
<dbReference type="EMBL" id="BC082313">
    <property type="protein sequence ID" value="AAH82313.1"/>
    <property type="status" value="ALT_FRAME"/>
    <property type="molecule type" value="mRNA"/>
</dbReference>
<dbReference type="EMBL" id="AK129257">
    <property type="protein sequence ID" value="BAC98067.1"/>
    <property type="molecule type" value="mRNA"/>
</dbReference>
<dbReference type="CCDS" id="CCDS23140.2">
    <molecule id="Q6P4S6-1"/>
</dbReference>
<dbReference type="RefSeq" id="NP_081774.3">
    <molecule id="Q6P4S6-1"/>
    <property type="nucleotide sequence ID" value="NM_027498.3"/>
</dbReference>
<dbReference type="SMR" id="Q6P4S6"/>
<dbReference type="BioGRID" id="214193">
    <property type="interactions" value="8"/>
</dbReference>
<dbReference type="FunCoup" id="Q6P4S6">
    <property type="interactions" value="2491"/>
</dbReference>
<dbReference type="IntAct" id="Q6P4S6">
    <property type="interactions" value="5"/>
</dbReference>
<dbReference type="STRING" id="10090.ENSMUSP00000121032"/>
<dbReference type="GlyGen" id="Q6P4S6">
    <property type="glycosylation" value="4 sites, 1 O-linked glycan (1 site)"/>
</dbReference>
<dbReference type="iPTMnet" id="Q6P4S6"/>
<dbReference type="PhosphoSitePlus" id="Q6P4S6"/>
<dbReference type="jPOST" id="Q6P4S6"/>
<dbReference type="PaxDb" id="10090-ENSMUSP00000121032"/>
<dbReference type="PeptideAtlas" id="Q6P4S6"/>
<dbReference type="ProteomicsDB" id="257248">
    <molecule id="Q6P4S6-1"/>
</dbReference>
<dbReference type="ProteomicsDB" id="257249">
    <molecule id="Q6P4S6-2"/>
</dbReference>
<dbReference type="ProteomicsDB" id="344903"/>
<dbReference type="Pumba" id="Q6P4S6"/>
<dbReference type="Antibodypedia" id="56803">
    <property type="antibodies" value="167 antibodies from 27 providers"/>
</dbReference>
<dbReference type="DNASU" id="70661"/>
<dbReference type="Ensembl" id="ENSMUST00000126865.8">
    <molecule id="Q6P4S6-1"/>
    <property type="protein sequence ID" value="ENSMUSP00000121032.2"/>
    <property type="gene ID" value="ENSMUSG00000034135.16"/>
</dbReference>
<dbReference type="GeneID" id="70661"/>
<dbReference type="KEGG" id="mmu:70661"/>
<dbReference type="UCSC" id="uc009pha.1">
    <molecule id="Q6P4S6-2"/>
    <property type="organism name" value="mouse"/>
</dbReference>
<dbReference type="AGR" id="MGI:2446296"/>
<dbReference type="CTD" id="23387"/>
<dbReference type="MGI" id="MGI:2446296">
    <property type="gene designation" value="Sik3"/>
</dbReference>
<dbReference type="VEuPathDB" id="HostDB:ENSMUSG00000034135"/>
<dbReference type="eggNOG" id="KOG0586">
    <property type="taxonomic scope" value="Eukaryota"/>
</dbReference>
<dbReference type="GeneTree" id="ENSGT00940000157259"/>
<dbReference type="InParanoid" id="Q6P4S6"/>
<dbReference type="OMA" id="HRYIYKD"/>
<dbReference type="OrthoDB" id="10045473at2759"/>
<dbReference type="PhylomeDB" id="Q6P4S6"/>
<dbReference type="TreeFam" id="TF315213"/>
<dbReference type="BioGRID-ORCS" id="70661">
    <property type="hits" value="6 hits in 82 CRISPR screens"/>
</dbReference>
<dbReference type="ChiTaRS" id="Sik3">
    <property type="organism name" value="mouse"/>
</dbReference>
<dbReference type="PRO" id="PR:Q6P4S6"/>
<dbReference type="Proteomes" id="UP000000589">
    <property type="component" value="Chromosome 9"/>
</dbReference>
<dbReference type="RNAct" id="Q6P4S6">
    <property type="molecule type" value="protein"/>
</dbReference>
<dbReference type="Bgee" id="ENSMUSG00000034135">
    <property type="expression patterns" value="Expressed in substantia nigra and 228 other cell types or tissues"/>
</dbReference>
<dbReference type="GO" id="GO:0005737">
    <property type="term" value="C:cytoplasm"/>
    <property type="evidence" value="ECO:0000314"/>
    <property type="project" value="MGI"/>
</dbReference>
<dbReference type="GO" id="GO:0005524">
    <property type="term" value="F:ATP binding"/>
    <property type="evidence" value="ECO:0000250"/>
    <property type="project" value="UniProtKB"/>
</dbReference>
<dbReference type="GO" id="GO:0000287">
    <property type="term" value="F:magnesium ion binding"/>
    <property type="evidence" value="ECO:0000250"/>
    <property type="project" value="UniProtKB"/>
</dbReference>
<dbReference type="GO" id="GO:0106310">
    <property type="term" value="F:protein serine kinase activity"/>
    <property type="evidence" value="ECO:0007669"/>
    <property type="project" value="RHEA"/>
</dbReference>
<dbReference type="GO" id="GO:0004674">
    <property type="term" value="F:protein serine/threonine kinase activity"/>
    <property type="evidence" value="ECO:0000250"/>
    <property type="project" value="UniProtKB"/>
</dbReference>
<dbReference type="GO" id="GO:0060351">
    <property type="term" value="P:cartilage development involved in endochondral bone morphogenesis"/>
    <property type="evidence" value="ECO:0000315"/>
    <property type="project" value="MGI"/>
</dbReference>
<dbReference type="GO" id="GO:0001958">
    <property type="term" value="P:endochondral ossification"/>
    <property type="evidence" value="ECO:0000315"/>
    <property type="project" value="MGI"/>
</dbReference>
<dbReference type="GO" id="GO:0035108">
    <property type="term" value="P:limb morphogenesis"/>
    <property type="evidence" value="ECO:0000315"/>
    <property type="project" value="MGI"/>
</dbReference>
<dbReference type="GO" id="GO:0035264">
    <property type="term" value="P:multicellular organism growth"/>
    <property type="evidence" value="ECO:0000315"/>
    <property type="project" value="MGI"/>
</dbReference>
<dbReference type="GO" id="GO:1904263">
    <property type="term" value="P:positive regulation of TORC1 signaling"/>
    <property type="evidence" value="ECO:0000250"/>
    <property type="project" value="UniProtKB"/>
</dbReference>
<dbReference type="GO" id="GO:1904515">
    <property type="term" value="P:positive regulation of TORC2 signaling"/>
    <property type="evidence" value="ECO:0000250"/>
    <property type="project" value="UniProtKB"/>
</dbReference>
<dbReference type="GO" id="GO:0006468">
    <property type="term" value="P:protein phosphorylation"/>
    <property type="evidence" value="ECO:0000250"/>
    <property type="project" value="UniProtKB"/>
</dbReference>
<dbReference type="GO" id="GO:0032880">
    <property type="term" value="P:regulation of protein localization"/>
    <property type="evidence" value="ECO:0000315"/>
    <property type="project" value="MGI"/>
</dbReference>
<dbReference type="GO" id="GO:0048705">
    <property type="term" value="P:skeletal system morphogenesis"/>
    <property type="evidence" value="ECO:0000315"/>
    <property type="project" value="MGI"/>
</dbReference>
<dbReference type="CDD" id="cd14071">
    <property type="entry name" value="STKc_SIK"/>
    <property type="match status" value="1"/>
</dbReference>
<dbReference type="CDD" id="cd14410">
    <property type="entry name" value="UBA_SIK3"/>
    <property type="match status" value="1"/>
</dbReference>
<dbReference type="FunFam" id="3.30.200.20:FF:000003">
    <property type="entry name" value="Non-specific serine/threonine protein kinase"/>
    <property type="match status" value="1"/>
</dbReference>
<dbReference type="FunFam" id="1.10.510.10:FF:000156">
    <property type="entry name" value="Serine/threonine-protein kinase SIK3 homolog"/>
    <property type="match status" value="1"/>
</dbReference>
<dbReference type="Gene3D" id="1.10.510.10">
    <property type="entry name" value="Transferase(Phosphotransferase) domain 1"/>
    <property type="match status" value="1"/>
</dbReference>
<dbReference type="InterPro" id="IPR011009">
    <property type="entry name" value="Kinase-like_dom_sf"/>
</dbReference>
<dbReference type="InterPro" id="IPR000719">
    <property type="entry name" value="Prot_kinase_dom"/>
</dbReference>
<dbReference type="InterPro" id="IPR017441">
    <property type="entry name" value="Protein_kinase_ATP_BS"/>
</dbReference>
<dbReference type="InterPro" id="IPR008271">
    <property type="entry name" value="Ser/Thr_kinase_AS"/>
</dbReference>
<dbReference type="InterPro" id="IPR034672">
    <property type="entry name" value="SIK"/>
</dbReference>
<dbReference type="InterPro" id="IPR015940">
    <property type="entry name" value="UBA"/>
</dbReference>
<dbReference type="PANTHER" id="PTHR24346">
    <property type="entry name" value="MAP/MICROTUBULE AFFINITY-REGULATING KINASE"/>
    <property type="match status" value="1"/>
</dbReference>
<dbReference type="PANTHER" id="PTHR24346:SF42">
    <property type="entry name" value="SERINE_THREONINE-PROTEIN KINASE SIK3"/>
    <property type="match status" value="1"/>
</dbReference>
<dbReference type="Pfam" id="PF00069">
    <property type="entry name" value="Pkinase"/>
    <property type="match status" value="1"/>
</dbReference>
<dbReference type="Pfam" id="PF23312">
    <property type="entry name" value="UBA_SIK3"/>
    <property type="match status" value="1"/>
</dbReference>
<dbReference type="SMART" id="SM00220">
    <property type="entry name" value="S_TKc"/>
    <property type="match status" value="1"/>
</dbReference>
<dbReference type="SUPFAM" id="SSF56112">
    <property type="entry name" value="Protein kinase-like (PK-like)"/>
    <property type="match status" value="1"/>
</dbReference>
<dbReference type="PROSITE" id="PS00107">
    <property type="entry name" value="PROTEIN_KINASE_ATP"/>
    <property type="match status" value="1"/>
</dbReference>
<dbReference type="PROSITE" id="PS50011">
    <property type="entry name" value="PROTEIN_KINASE_DOM"/>
    <property type="match status" value="1"/>
</dbReference>
<dbReference type="PROSITE" id="PS00108">
    <property type="entry name" value="PROTEIN_KINASE_ST"/>
    <property type="match status" value="1"/>
</dbReference>
<dbReference type="PROSITE" id="PS50030">
    <property type="entry name" value="UBA"/>
    <property type="match status" value="1"/>
</dbReference>
<name>SIK3_MOUSE</name>
<keyword id="KW-0025">Alternative splicing</keyword>
<keyword id="KW-0067">ATP-binding</keyword>
<keyword id="KW-0963">Cytoplasm</keyword>
<keyword id="KW-0418">Kinase</keyword>
<keyword id="KW-0460">Magnesium</keyword>
<keyword id="KW-0479">Metal-binding</keyword>
<keyword id="KW-0488">Methylation</keyword>
<keyword id="KW-0547">Nucleotide-binding</keyword>
<keyword id="KW-0597">Phosphoprotein</keyword>
<keyword id="KW-1185">Reference proteome</keyword>
<keyword id="KW-0723">Serine/threonine-protein kinase</keyword>
<keyword id="KW-0808">Transferase</keyword>
<reference key="1">
    <citation type="journal article" date="2005" name="Science">
        <title>The transcriptional landscape of the mammalian genome.</title>
        <authorList>
            <person name="Carninci P."/>
            <person name="Kasukawa T."/>
            <person name="Katayama S."/>
            <person name="Gough J."/>
            <person name="Frith M.C."/>
            <person name="Maeda N."/>
            <person name="Oyama R."/>
            <person name="Ravasi T."/>
            <person name="Lenhard B."/>
            <person name="Wells C."/>
            <person name="Kodzius R."/>
            <person name="Shimokawa K."/>
            <person name="Bajic V.B."/>
            <person name="Brenner S.E."/>
            <person name="Batalov S."/>
            <person name="Forrest A.R."/>
            <person name="Zavolan M."/>
            <person name="Davis M.J."/>
            <person name="Wilming L.G."/>
            <person name="Aidinis V."/>
            <person name="Allen J.E."/>
            <person name="Ambesi-Impiombato A."/>
            <person name="Apweiler R."/>
            <person name="Aturaliya R.N."/>
            <person name="Bailey T.L."/>
            <person name="Bansal M."/>
            <person name="Baxter L."/>
            <person name="Beisel K.W."/>
            <person name="Bersano T."/>
            <person name="Bono H."/>
            <person name="Chalk A.M."/>
            <person name="Chiu K.P."/>
            <person name="Choudhary V."/>
            <person name="Christoffels A."/>
            <person name="Clutterbuck D.R."/>
            <person name="Crowe M.L."/>
            <person name="Dalla E."/>
            <person name="Dalrymple B.P."/>
            <person name="de Bono B."/>
            <person name="Della Gatta G."/>
            <person name="di Bernardo D."/>
            <person name="Down T."/>
            <person name="Engstrom P."/>
            <person name="Fagiolini M."/>
            <person name="Faulkner G."/>
            <person name="Fletcher C.F."/>
            <person name="Fukushima T."/>
            <person name="Furuno M."/>
            <person name="Futaki S."/>
            <person name="Gariboldi M."/>
            <person name="Georgii-Hemming P."/>
            <person name="Gingeras T.R."/>
            <person name="Gojobori T."/>
            <person name="Green R.E."/>
            <person name="Gustincich S."/>
            <person name="Harbers M."/>
            <person name="Hayashi Y."/>
            <person name="Hensch T.K."/>
            <person name="Hirokawa N."/>
            <person name="Hill D."/>
            <person name="Huminiecki L."/>
            <person name="Iacono M."/>
            <person name="Ikeo K."/>
            <person name="Iwama A."/>
            <person name="Ishikawa T."/>
            <person name="Jakt M."/>
            <person name="Kanapin A."/>
            <person name="Katoh M."/>
            <person name="Kawasawa Y."/>
            <person name="Kelso J."/>
            <person name="Kitamura H."/>
            <person name="Kitano H."/>
            <person name="Kollias G."/>
            <person name="Krishnan S.P."/>
            <person name="Kruger A."/>
            <person name="Kummerfeld S.K."/>
            <person name="Kurochkin I.V."/>
            <person name="Lareau L.F."/>
            <person name="Lazarevic D."/>
            <person name="Lipovich L."/>
            <person name="Liu J."/>
            <person name="Liuni S."/>
            <person name="McWilliam S."/>
            <person name="Madan Babu M."/>
            <person name="Madera M."/>
            <person name="Marchionni L."/>
            <person name="Matsuda H."/>
            <person name="Matsuzawa S."/>
            <person name="Miki H."/>
            <person name="Mignone F."/>
            <person name="Miyake S."/>
            <person name="Morris K."/>
            <person name="Mottagui-Tabar S."/>
            <person name="Mulder N."/>
            <person name="Nakano N."/>
            <person name="Nakauchi H."/>
            <person name="Ng P."/>
            <person name="Nilsson R."/>
            <person name="Nishiguchi S."/>
            <person name="Nishikawa S."/>
            <person name="Nori F."/>
            <person name="Ohara O."/>
            <person name="Okazaki Y."/>
            <person name="Orlando V."/>
            <person name="Pang K.C."/>
            <person name="Pavan W.J."/>
            <person name="Pavesi G."/>
            <person name="Pesole G."/>
            <person name="Petrovsky N."/>
            <person name="Piazza S."/>
            <person name="Reed J."/>
            <person name="Reid J.F."/>
            <person name="Ring B.Z."/>
            <person name="Ringwald M."/>
            <person name="Rost B."/>
            <person name="Ruan Y."/>
            <person name="Salzberg S.L."/>
            <person name="Sandelin A."/>
            <person name="Schneider C."/>
            <person name="Schoenbach C."/>
            <person name="Sekiguchi K."/>
            <person name="Semple C.A."/>
            <person name="Seno S."/>
            <person name="Sessa L."/>
            <person name="Sheng Y."/>
            <person name="Shibata Y."/>
            <person name="Shimada H."/>
            <person name="Shimada K."/>
            <person name="Silva D."/>
            <person name="Sinclair B."/>
            <person name="Sperling S."/>
            <person name="Stupka E."/>
            <person name="Sugiura K."/>
            <person name="Sultana R."/>
            <person name="Takenaka Y."/>
            <person name="Taki K."/>
            <person name="Tammoja K."/>
            <person name="Tan S.L."/>
            <person name="Tang S."/>
            <person name="Taylor M.S."/>
            <person name="Tegner J."/>
            <person name="Teichmann S.A."/>
            <person name="Ueda H.R."/>
            <person name="van Nimwegen E."/>
            <person name="Verardo R."/>
            <person name="Wei C.L."/>
            <person name="Yagi K."/>
            <person name="Yamanishi H."/>
            <person name="Zabarovsky E."/>
            <person name="Zhu S."/>
            <person name="Zimmer A."/>
            <person name="Hide W."/>
            <person name="Bult C."/>
            <person name="Grimmond S.M."/>
            <person name="Teasdale R.D."/>
            <person name="Liu E.T."/>
            <person name="Brusic V."/>
            <person name="Quackenbush J."/>
            <person name="Wahlestedt C."/>
            <person name="Mattick J.S."/>
            <person name="Hume D.A."/>
            <person name="Kai C."/>
            <person name="Sasaki D."/>
            <person name="Tomaru Y."/>
            <person name="Fukuda S."/>
            <person name="Kanamori-Katayama M."/>
            <person name="Suzuki M."/>
            <person name="Aoki J."/>
            <person name="Arakawa T."/>
            <person name="Iida J."/>
            <person name="Imamura K."/>
            <person name="Itoh M."/>
            <person name="Kato T."/>
            <person name="Kawaji H."/>
            <person name="Kawagashira N."/>
            <person name="Kawashima T."/>
            <person name="Kojima M."/>
            <person name="Kondo S."/>
            <person name="Konno H."/>
            <person name="Nakano K."/>
            <person name="Ninomiya N."/>
            <person name="Nishio T."/>
            <person name="Okada M."/>
            <person name="Plessy C."/>
            <person name="Shibata K."/>
            <person name="Shiraki T."/>
            <person name="Suzuki S."/>
            <person name="Tagami M."/>
            <person name="Waki K."/>
            <person name="Watahiki A."/>
            <person name="Okamura-Oho Y."/>
            <person name="Suzuki H."/>
            <person name="Kawai J."/>
            <person name="Hayashizaki Y."/>
        </authorList>
    </citation>
    <scope>NUCLEOTIDE SEQUENCE [LARGE SCALE MRNA] (ISOFORM 2)</scope>
    <source>
        <strain>C57BL/6J</strain>
        <tissue>Embryo</tissue>
    </source>
</reference>
<reference key="2">
    <citation type="journal article" date="2009" name="PLoS Biol.">
        <title>Lineage-specific biology revealed by a finished genome assembly of the mouse.</title>
        <authorList>
            <person name="Church D.M."/>
            <person name="Goodstadt L."/>
            <person name="Hillier L.W."/>
            <person name="Zody M.C."/>
            <person name="Goldstein S."/>
            <person name="She X."/>
            <person name="Bult C.J."/>
            <person name="Agarwala R."/>
            <person name="Cherry J.L."/>
            <person name="DiCuccio M."/>
            <person name="Hlavina W."/>
            <person name="Kapustin Y."/>
            <person name="Meric P."/>
            <person name="Maglott D."/>
            <person name="Birtle Z."/>
            <person name="Marques A.C."/>
            <person name="Graves T."/>
            <person name="Zhou S."/>
            <person name="Teague B."/>
            <person name="Potamousis K."/>
            <person name="Churas C."/>
            <person name="Place M."/>
            <person name="Herschleb J."/>
            <person name="Runnheim R."/>
            <person name="Forrest D."/>
            <person name="Amos-Landgraf J."/>
            <person name="Schwartz D.C."/>
            <person name="Cheng Z."/>
            <person name="Lindblad-Toh K."/>
            <person name="Eichler E.E."/>
            <person name="Ponting C.P."/>
        </authorList>
    </citation>
    <scope>NUCLEOTIDE SEQUENCE [LARGE SCALE GENOMIC DNA]</scope>
    <source>
        <strain>C57BL/6J</strain>
    </source>
</reference>
<reference key="3">
    <citation type="journal article" date="2004" name="Genome Res.">
        <title>The status, quality, and expansion of the NIH full-length cDNA project: the Mammalian Gene Collection (MGC).</title>
        <authorList>
            <consortium name="The MGC Project Team"/>
        </authorList>
    </citation>
    <scope>NUCLEOTIDE SEQUENCE [LARGE SCALE MRNA] OF 8-1369 (ISOFORM 1)</scope>
    <source>
        <strain>C57BL/6J</strain>
        <strain>FVB/N</strain>
        <tissue>Embryonic brain</tissue>
        <tissue>Embryonic limb</tissue>
        <tissue>Salivary gland</tissue>
        <tissue>Thymus</tissue>
    </source>
</reference>
<reference key="4">
    <citation type="journal article" date="2003" name="DNA Res.">
        <title>Prediction of the coding sequences of mouse homologues of KIAA gene: III. The complete nucleotide sequences of 500 mouse KIAA-homologous cDNAs identified by screening of terminal sequences of cDNA clones randomly sampled from size-fractionated libraries.</title>
        <authorList>
            <person name="Okazaki N."/>
            <person name="Kikuno R."/>
            <person name="Ohara R."/>
            <person name="Inamoto S."/>
            <person name="Koseki H."/>
            <person name="Hiraoka S."/>
            <person name="Saga Y."/>
            <person name="Nagase T."/>
            <person name="Ohara O."/>
            <person name="Koga H."/>
        </authorList>
    </citation>
    <scope>NUCLEOTIDE SEQUENCE [LARGE SCALE MRNA] OF 318-1369 (ISOFORM 1)</scope>
    <source>
        <tissue>Fetal brain</tissue>
    </source>
</reference>
<reference key="5">
    <citation type="journal article" date="2007" name="Proc. Natl. Acad. Sci. U.S.A.">
        <title>Large-scale phosphorylation analysis of mouse liver.</title>
        <authorList>
            <person name="Villen J."/>
            <person name="Beausoleil S.A."/>
            <person name="Gerber S.A."/>
            <person name="Gygi S.P."/>
        </authorList>
    </citation>
    <scope>PHOSPHORYLATION [LARGE SCALE ANALYSIS] AT SER-551; SER-591 AND SER-592</scope>
    <scope>IDENTIFICATION BY MASS SPECTROMETRY [LARGE SCALE ANALYSIS]</scope>
    <source>
        <tissue>Liver</tissue>
    </source>
</reference>
<reference key="6">
    <citation type="journal article" date="2010" name="Cell">
        <title>A tissue-specific atlas of mouse protein phosphorylation and expression.</title>
        <authorList>
            <person name="Huttlin E.L."/>
            <person name="Jedrychowski M.P."/>
            <person name="Elias J.E."/>
            <person name="Goswami T."/>
            <person name="Rad R."/>
            <person name="Beausoleil S.A."/>
            <person name="Villen J."/>
            <person name="Haas W."/>
            <person name="Sowa M.E."/>
            <person name="Gygi S.P."/>
        </authorList>
    </citation>
    <scope>PHOSPHORYLATION [LARGE SCALE ANALYSIS] AT THR-221; SER-551; SER-591; SER-592; SER-674 AND SER-695</scope>
    <scope>IDENTIFICATION BY MASS SPECTROMETRY [LARGE SCALE ANALYSIS]</scope>
    <source>
        <tissue>Brain</tissue>
        <tissue>Brown adipose tissue</tissue>
        <tissue>Heart</tissue>
        <tissue>Kidney</tissue>
        <tissue>Liver</tissue>
        <tissue>Lung</tissue>
        <tissue>Pancreas</tissue>
        <tissue>Spleen</tissue>
        <tissue>Testis</tissue>
    </source>
</reference>
<reference key="7">
    <citation type="journal article" date="2012" name="Development">
        <title>SIK3 is essential for chondrocyte hypertrophy during skeletal development in mice.</title>
        <authorList>
            <person name="Sasagawa S."/>
            <person name="Takemori H."/>
            <person name="Uebi T."/>
            <person name="Ikegami D."/>
            <person name="Hiramatsu K."/>
            <person name="Ikegawa S."/>
            <person name="Yoshikawa H."/>
            <person name="Tsumaki N."/>
        </authorList>
    </citation>
    <scope>FUNCTION</scope>
    <scope>INTERACTION WITH HDAC4</scope>
    <scope>SUBCELLULAR LOCATION</scope>
    <scope>TISSUE SPECIFICITY</scope>
    <scope>DEVELOPMENTAL STAGE</scope>
    <scope>DISRUPTION PHENOTYPE</scope>
</reference>
<reference key="8">
    <citation type="journal article" date="2014" name="Mol. Cell. Proteomics">
        <title>Immunoaffinity enrichment and mass spectrometry analysis of protein methylation.</title>
        <authorList>
            <person name="Guo A."/>
            <person name="Gu H."/>
            <person name="Zhou J."/>
            <person name="Mulhern D."/>
            <person name="Wang Y."/>
            <person name="Lee K.A."/>
            <person name="Yang V."/>
            <person name="Aguiar M."/>
            <person name="Kornhauser J."/>
            <person name="Jia X."/>
            <person name="Ren J."/>
            <person name="Beausoleil S.A."/>
            <person name="Silva J.C."/>
            <person name="Vemulapalli V."/>
            <person name="Bedford M.T."/>
            <person name="Comb M.J."/>
        </authorList>
    </citation>
    <scope>METHYLATION [LARGE SCALE ANALYSIS] AT ARG-1034</scope>
    <scope>IDENTIFICATION BY MASS SPECTROMETRY [LARGE SCALE ANALYSIS]</scope>
    <source>
        <tissue>Brain</tissue>
        <tissue>Embryo</tissue>
    </source>
</reference>
<reference key="9">
    <citation type="journal article" date="2018" name="Sci. Transl. Med.">
        <title>The PTH/PTHrP-SIK3 pathway affects skeletogenesis through altered mTOR signaling.</title>
        <authorList>
            <person name="Csukasi F."/>
            <person name="Duran I."/>
            <person name="Barad M."/>
            <person name="Barta T."/>
            <person name="Gudernova I."/>
            <person name="Trantirek L."/>
            <person name="Martin J.H."/>
            <person name="Kuo C.Y."/>
            <person name="Woods J."/>
            <person name="Lee H."/>
            <person name="Cohn D.H."/>
            <person name="Krejci P."/>
            <person name="Krakow D."/>
        </authorList>
    </citation>
    <scope>DEVELOPMENTAL STAGE</scope>
</reference>
<protein>
    <recommendedName>
        <fullName>Serine/threonine-protein kinase SIK3</fullName>
        <ecNumber>2.7.11.1</ecNumber>
    </recommendedName>
    <alternativeName>
        <fullName>Salt-inducible kinase 3</fullName>
        <shortName>SIK-3</shortName>
    </alternativeName>
    <alternativeName>
        <fullName>Serine/threonine-protein kinase QSK</fullName>
    </alternativeName>
</protein>
<accession>Q6P4S6</accession>
<accession>E9PU87</accession>
<accession>Q641L5</accession>
<accession>Q66JZ5</accession>
<accession>Q6ZQ09</accession>
<accession>Q8K075</accession>
<accession>Q9CYD5</accession>
<feature type="chain" id="PRO_0000252258" description="Serine/threonine-protein kinase SIK3">
    <location>
        <begin position="1"/>
        <end position="1369"/>
    </location>
</feature>
<feature type="domain" description="Protein kinase" evidence="4">
    <location>
        <begin position="66"/>
        <end position="317"/>
    </location>
</feature>
<feature type="domain" description="UBA" evidence="5">
    <location>
        <begin position="344"/>
        <end position="384"/>
    </location>
</feature>
<feature type="region of interest" description="Disordered" evidence="7">
    <location>
        <begin position="26"/>
        <end position="55"/>
    </location>
</feature>
<feature type="region of interest" description="Disordered" evidence="7">
    <location>
        <begin position="775"/>
        <end position="821"/>
    </location>
</feature>
<feature type="region of interest" description="Disordered" evidence="7">
    <location>
        <begin position="942"/>
        <end position="993"/>
    </location>
</feature>
<feature type="region of interest" description="Disordered" evidence="7">
    <location>
        <begin position="1314"/>
        <end position="1338"/>
    </location>
</feature>
<feature type="compositionally biased region" description="Pro residues" evidence="7">
    <location>
        <begin position="27"/>
        <end position="45"/>
    </location>
</feature>
<feature type="compositionally biased region" description="Low complexity" evidence="7">
    <location>
        <begin position="46"/>
        <end position="55"/>
    </location>
</feature>
<feature type="compositionally biased region" description="Polar residues" evidence="7">
    <location>
        <begin position="803"/>
        <end position="818"/>
    </location>
</feature>
<feature type="compositionally biased region" description="Low complexity" evidence="7">
    <location>
        <begin position="944"/>
        <end position="957"/>
    </location>
</feature>
<feature type="compositionally biased region" description="Polar residues" evidence="7">
    <location>
        <begin position="981"/>
        <end position="993"/>
    </location>
</feature>
<feature type="active site" description="Proton acceptor" evidence="4 6">
    <location>
        <position position="188"/>
    </location>
</feature>
<feature type="binding site" evidence="4">
    <location>
        <begin position="72"/>
        <end position="80"/>
    </location>
    <ligand>
        <name>ATP</name>
        <dbReference type="ChEBI" id="CHEBI:30616"/>
    </ligand>
</feature>
<feature type="binding site" evidence="4">
    <location>
        <position position="95"/>
    </location>
    <ligand>
        <name>ATP</name>
        <dbReference type="ChEBI" id="CHEBI:30616"/>
    </ligand>
</feature>
<feature type="modified residue" description="Phosphothreonine" evidence="3">
    <location>
        <position position="71"/>
    </location>
</feature>
<feature type="modified residue" description="Phosphothreonine" evidence="13">
    <location>
        <position position="221"/>
    </location>
</feature>
<feature type="modified residue" description="Phosphothreonine" evidence="3">
    <location>
        <position position="469"/>
    </location>
</feature>
<feature type="modified residue" description="Phosphoserine" evidence="12 13">
    <location>
        <position position="551"/>
    </location>
</feature>
<feature type="modified residue" description="Phosphoserine" evidence="12 13">
    <location>
        <position position="591"/>
    </location>
</feature>
<feature type="modified residue" description="Phosphoserine" evidence="12 13">
    <location>
        <position position="592"/>
    </location>
</feature>
<feature type="modified residue" description="Phosphoserine" evidence="13">
    <location>
        <position position="674"/>
    </location>
</feature>
<feature type="modified residue" description="Phosphoserine" evidence="13">
    <location>
        <position position="695"/>
    </location>
</feature>
<feature type="modified residue" description="Phosphoserine" evidence="3">
    <location>
        <position position="914"/>
    </location>
</feature>
<feature type="modified residue" description="Phosphoserine" evidence="3">
    <location>
        <position position="1026"/>
    </location>
</feature>
<feature type="modified residue" description="Omega-N-methylarginine" evidence="14">
    <location>
        <position position="1034"/>
    </location>
</feature>
<feature type="splice variant" id="VSP_020894" description="In isoform 2." evidence="10">
    <location>
        <begin position="1"/>
        <end position="116"/>
    </location>
</feature>
<feature type="splice variant" id="VSP_020895" description="In isoform 2." evidence="10">
    <location>
        <begin position="604"/>
        <end position="1369"/>
    </location>
</feature>
<feature type="sequence conflict" description="In Ref. 3; AAH63268/AAH80688." evidence="11" ref="3">
    <original>Q</original>
    <variation>H</variation>
    <location>
        <position position="1090"/>
    </location>
</feature>
<feature type="sequence conflict" description="In Ref. 3; AAH63268/AAH80688." evidence="11" ref="3">
    <original>S</original>
    <variation>N</variation>
    <location>
        <position position="1335"/>
    </location>
</feature>
<evidence type="ECO:0000250" key="1"/>
<evidence type="ECO:0000250" key="2">
    <source>
        <dbReference type="UniProtKB" id="Q9H0K1"/>
    </source>
</evidence>
<evidence type="ECO:0000250" key="3">
    <source>
        <dbReference type="UniProtKB" id="Q9Y2K2"/>
    </source>
</evidence>
<evidence type="ECO:0000255" key="4">
    <source>
        <dbReference type="PROSITE-ProRule" id="PRU00159"/>
    </source>
</evidence>
<evidence type="ECO:0000255" key="5">
    <source>
        <dbReference type="PROSITE-ProRule" id="PRU00212"/>
    </source>
</evidence>
<evidence type="ECO:0000255" key="6">
    <source>
        <dbReference type="PROSITE-ProRule" id="PRU10027"/>
    </source>
</evidence>
<evidence type="ECO:0000256" key="7">
    <source>
        <dbReference type="SAM" id="MobiDB-lite"/>
    </source>
</evidence>
<evidence type="ECO:0000269" key="8">
    <source>
    </source>
</evidence>
<evidence type="ECO:0000269" key="9">
    <source>
    </source>
</evidence>
<evidence type="ECO:0000303" key="10">
    <source>
    </source>
</evidence>
<evidence type="ECO:0000305" key="11"/>
<evidence type="ECO:0007744" key="12">
    <source>
    </source>
</evidence>
<evidence type="ECO:0007744" key="13">
    <source>
    </source>
</evidence>
<evidence type="ECO:0007744" key="14">
    <source>
    </source>
</evidence>
<organism>
    <name type="scientific">Mus musculus</name>
    <name type="common">Mouse</name>
    <dbReference type="NCBI Taxonomy" id="10090"/>
    <lineage>
        <taxon>Eukaryota</taxon>
        <taxon>Metazoa</taxon>
        <taxon>Chordata</taxon>
        <taxon>Craniata</taxon>
        <taxon>Vertebrata</taxon>
        <taxon>Euteleostomi</taxon>
        <taxon>Mammalia</taxon>
        <taxon>Eutheria</taxon>
        <taxon>Euarchontoglires</taxon>
        <taxon>Glires</taxon>
        <taxon>Rodentia</taxon>
        <taxon>Myomorpha</taxon>
        <taxon>Muroidea</taxon>
        <taxon>Muridae</taxon>
        <taxon>Murinae</taxon>
        <taxon>Mus</taxon>
        <taxon>Mus</taxon>
    </lineage>
</organism>